<reference key="1">
    <citation type="journal article" date="1985" name="Proc. Natl. Acad. Sci. U.S.A.">
        <title>Nucleotide sequence of the Dpn II DNA methylase gene of Streptococcus pneumoniae and its relationship to the dam gene of Escherichia coli.</title>
        <authorList>
            <person name="Mannarelli B.M."/>
            <person name="Balganesh T.S."/>
            <person name="Greenberg B."/>
            <person name="Springhorn S.S."/>
            <person name="Lacks S.A."/>
        </authorList>
    </citation>
    <scope>NUCLEOTIDE SEQUENCE [GENOMIC DNA]</scope>
    <scope>FUNCTION</scope>
    <scope>CATALYTIC ACTIVITY</scope>
    <source>
        <strain>697</strain>
    </source>
</reference>
<reference key="2">
    <citation type="journal article" date="1986" name="Cell">
        <title>Genetic basis of the complementary DpnI and DpnII restriction systems of S. pneumoniae: an intercellular cassette mechanism.</title>
        <authorList>
            <person name="Lacks S.A."/>
            <person name="Mannarelli B.M."/>
            <person name="Springhorn S.S."/>
            <person name="Greenberg B."/>
        </authorList>
    </citation>
    <scope>NUCLEOTIDE SEQUENCE [GENOMIC DNA]</scope>
    <source>
        <strain>697</strain>
    </source>
</reference>
<reference key="3">
    <citation type="journal article" date="1987" name="J. Mol. Biol.">
        <title>Proteins encoded by the DpnII restriction gene cassette. Two methylases and an endonuclease.</title>
        <authorList>
            <person name="de la Campa A.G."/>
            <person name="Purushottam K."/>
            <person name="Springhorn S.S."/>
            <person name="Lacks S.A."/>
        </authorList>
    </citation>
    <scope>PROTEIN SEQUENCE OF 1-14</scope>
    <scope>FUNCTION</scope>
    <scope>SUBUNIT</scope>
</reference>
<reference key="4">
    <citation type="journal article" date="1989" name="Proc. Natl. Acad. Sci. U.S.A.">
        <title>DpnA, a methylase for single-strand DNA in the Dpn II restriction system, and its biological function.</title>
        <authorList>
            <person name="Cerritelli S."/>
            <person name="Springhorn S.S."/>
            <person name="Lacks S.A."/>
        </authorList>
    </citation>
    <scope>FUNCTION</scope>
    <scope>CATALYTIC ACTIVITY</scope>
</reference>
<reference key="5">
    <citation type="journal article" date="2003" name="Nucleic Acids Res.">
        <title>A nomenclature for restriction enzymes, DNA methyltransferases, homing endonucleases and their genes.</title>
        <authorList>
            <person name="Roberts R.J."/>
            <person name="Belfort M."/>
            <person name="Bestor T."/>
            <person name="Bhagwat A.S."/>
            <person name="Bickle T.A."/>
            <person name="Bitinaite J."/>
            <person name="Blumenthal R.M."/>
            <person name="Degtyarev S.K."/>
            <person name="Dryden D.T."/>
            <person name="Dybvig K."/>
            <person name="Firman K."/>
            <person name="Gromova E.S."/>
            <person name="Gumport R.I."/>
            <person name="Halford S.E."/>
            <person name="Hattman S."/>
            <person name="Heitman J."/>
            <person name="Hornby D.P."/>
            <person name="Janulaitis A."/>
            <person name="Jeltsch A."/>
            <person name="Josephsen J."/>
            <person name="Kiss A."/>
            <person name="Klaenhammer T.R."/>
            <person name="Kobayashi I."/>
            <person name="Kong H."/>
            <person name="Krueger D.H."/>
            <person name="Lacks S."/>
            <person name="Marinus M.G."/>
            <person name="Miyahara M."/>
            <person name="Morgan R.D."/>
            <person name="Murray N.E."/>
            <person name="Nagaraja V."/>
            <person name="Piekarowicz A."/>
            <person name="Pingoud A."/>
            <person name="Raleigh E."/>
            <person name="Rao D.N."/>
            <person name="Reich N."/>
            <person name="Repin V.E."/>
            <person name="Selker E.U."/>
            <person name="Shaw P.C."/>
            <person name="Stein D.C."/>
            <person name="Stoddard B.L."/>
            <person name="Szybalski W."/>
            <person name="Trautner T.A."/>
            <person name="Van Etten J.L."/>
            <person name="Vitor J.M."/>
            <person name="Wilson G.G."/>
            <person name="Xu S.Y."/>
        </authorList>
    </citation>
    <scope>NOMENCLATURE</scope>
    <scope>SUBTYPE</scope>
</reference>
<reference key="6">
    <citation type="journal article" date="1998" name="Structure">
        <title>Crystal structure of the DpnM DNA adenine methyltransferase from the DpnII restriction system of Streptococcus pneumoniae bound to S-adenosylmethionine.</title>
        <authorList>
            <person name="Tran P.H."/>
            <person name="Korszun Z.R."/>
            <person name="Cerritelli S."/>
            <person name="Springhorn S.S."/>
            <person name="Lacks S.A."/>
        </authorList>
    </citation>
    <scope>X-RAY CRYSTALLOGRAPHY (1.8 ANGSTROMS) OF 10-284 IN COMPLEX WITH S-ADENOSYL-L-METHIONINE</scope>
    <source>
        <strain>HB264</strain>
    </source>
</reference>
<comment type="function">
    <text evidence="1 2 3 5">An alpha subtype methylase that recognizes the double-stranded sequence 5'-GATC-3', methylates A-2 on both strands, and protects the DNA from cleavage by the DpnII endonuclease.</text>
</comment>
<comment type="catalytic activity">
    <reaction evidence="1 3">
        <text>a 2'-deoxyadenosine in DNA + S-adenosyl-L-methionine = an N(6)-methyl-2'-deoxyadenosine in DNA + S-adenosyl-L-homocysteine + H(+)</text>
        <dbReference type="Rhea" id="RHEA:15197"/>
        <dbReference type="Rhea" id="RHEA-COMP:12418"/>
        <dbReference type="Rhea" id="RHEA-COMP:12419"/>
        <dbReference type="ChEBI" id="CHEBI:15378"/>
        <dbReference type="ChEBI" id="CHEBI:57856"/>
        <dbReference type="ChEBI" id="CHEBI:59789"/>
        <dbReference type="ChEBI" id="CHEBI:90615"/>
        <dbReference type="ChEBI" id="CHEBI:90616"/>
        <dbReference type="EC" id="2.1.1.72"/>
    </reaction>
</comment>
<comment type="subunit">
    <text evidence="4 9">Monomer (PubMed:9862809). Homodimer (Probable).</text>
</comment>
<comment type="miscellaneous">
    <text evidence="2">The DpnII restriction system has two different methylases.</text>
</comment>
<comment type="similarity">
    <text evidence="8">Belongs to the N(4)/N(6)-methyltransferase family.</text>
</comment>
<name>MTD21_STREE</name>
<dbReference type="EC" id="2.1.1.72" evidence="3"/>
<dbReference type="EMBL" id="M11226">
    <property type="protein sequence ID" value="AAA26872.1"/>
    <property type="molecule type" value="Genomic_DNA"/>
</dbReference>
<dbReference type="EMBL" id="M14339">
    <property type="protein sequence ID" value="AAA88580.1"/>
    <property type="molecule type" value="Genomic_DNA"/>
</dbReference>
<dbReference type="PIR" id="A00556">
    <property type="entry name" value="XYSONA"/>
</dbReference>
<dbReference type="RefSeq" id="WP_000692845.1">
    <property type="nucleotide sequence ID" value="NZ_WNIC01000007.1"/>
</dbReference>
<dbReference type="PDB" id="2DPM">
    <property type="method" value="X-ray"/>
    <property type="resolution" value="1.80 A"/>
    <property type="chains" value="A=1-284"/>
</dbReference>
<dbReference type="PDBsum" id="2DPM"/>
<dbReference type="SMR" id="P04043"/>
<dbReference type="REBASE" id="162065">
    <property type="entry name" value="M.Wso11848ORF439P"/>
</dbReference>
<dbReference type="REBASE" id="3636">
    <property type="entry name" value="M1.DpnII"/>
</dbReference>
<dbReference type="OMA" id="YMNRHGF"/>
<dbReference type="BRENDA" id="2.1.1.72">
    <property type="organism ID" value="1960"/>
</dbReference>
<dbReference type="EvolutionaryTrace" id="P04043"/>
<dbReference type="PRO" id="PR:P04043"/>
<dbReference type="GO" id="GO:1904047">
    <property type="term" value="F:S-adenosyl-L-methionine binding"/>
    <property type="evidence" value="ECO:0007669"/>
    <property type="project" value="TreeGrafter"/>
</dbReference>
<dbReference type="GO" id="GO:0043565">
    <property type="term" value="F:sequence-specific DNA binding"/>
    <property type="evidence" value="ECO:0007669"/>
    <property type="project" value="TreeGrafter"/>
</dbReference>
<dbReference type="GO" id="GO:0009007">
    <property type="term" value="F:site-specific DNA-methyltransferase (adenine-specific) activity"/>
    <property type="evidence" value="ECO:0007669"/>
    <property type="project" value="UniProtKB-EC"/>
</dbReference>
<dbReference type="GO" id="GO:0009307">
    <property type="term" value="P:DNA restriction-modification system"/>
    <property type="evidence" value="ECO:0007669"/>
    <property type="project" value="UniProtKB-KW"/>
</dbReference>
<dbReference type="GO" id="GO:0032259">
    <property type="term" value="P:methylation"/>
    <property type="evidence" value="ECO:0007669"/>
    <property type="project" value="UniProtKB-KW"/>
</dbReference>
<dbReference type="GO" id="GO:0006298">
    <property type="term" value="P:mismatch repair"/>
    <property type="evidence" value="ECO:0007669"/>
    <property type="project" value="TreeGrafter"/>
</dbReference>
<dbReference type="Gene3D" id="1.10.1020.10">
    <property type="entry name" value="Adenine-specific Methyltransferase, Domain 2"/>
    <property type="match status" value="1"/>
</dbReference>
<dbReference type="Gene3D" id="3.40.50.150">
    <property type="entry name" value="Vaccinia Virus protein VP39"/>
    <property type="match status" value="1"/>
</dbReference>
<dbReference type="InterPro" id="IPR023095">
    <property type="entry name" value="Ade_MeTrfase_dom_2"/>
</dbReference>
<dbReference type="InterPro" id="IPR002052">
    <property type="entry name" value="DNA_methylase_N6_adenine_CS"/>
</dbReference>
<dbReference type="InterPro" id="IPR012263">
    <property type="entry name" value="M_m6A_EcoRV"/>
</dbReference>
<dbReference type="InterPro" id="IPR012327">
    <property type="entry name" value="MeTrfase_D12"/>
</dbReference>
<dbReference type="InterPro" id="IPR029063">
    <property type="entry name" value="SAM-dependent_MTases_sf"/>
</dbReference>
<dbReference type="NCBIfam" id="TIGR00571">
    <property type="entry name" value="dam"/>
    <property type="match status" value="1"/>
</dbReference>
<dbReference type="PANTHER" id="PTHR30481">
    <property type="entry name" value="DNA ADENINE METHYLASE"/>
    <property type="match status" value="1"/>
</dbReference>
<dbReference type="PANTHER" id="PTHR30481:SF3">
    <property type="entry name" value="DNA ADENINE METHYLASE"/>
    <property type="match status" value="1"/>
</dbReference>
<dbReference type="Pfam" id="PF02086">
    <property type="entry name" value="MethyltransfD12"/>
    <property type="match status" value="1"/>
</dbReference>
<dbReference type="PIRSF" id="PIRSF000398">
    <property type="entry name" value="M_m6A_EcoRV"/>
    <property type="match status" value="1"/>
</dbReference>
<dbReference type="PRINTS" id="PR00505">
    <property type="entry name" value="D12N6MTFRASE"/>
</dbReference>
<dbReference type="SUPFAM" id="SSF53335">
    <property type="entry name" value="S-adenosyl-L-methionine-dependent methyltransferases"/>
    <property type="match status" value="1"/>
</dbReference>
<dbReference type="PROSITE" id="PS00092">
    <property type="entry name" value="N6_MTASE"/>
    <property type="match status" value="1"/>
</dbReference>
<evidence type="ECO:0000269" key="1">
    <source>
    </source>
</evidence>
<evidence type="ECO:0000269" key="2">
    <source>
    </source>
</evidence>
<evidence type="ECO:0000269" key="3">
    <source>
    </source>
</evidence>
<evidence type="ECO:0000269" key="4">
    <source>
    </source>
</evidence>
<evidence type="ECO:0000303" key="5">
    <source>
    </source>
</evidence>
<evidence type="ECO:0000303" key="6">
    <source>
    </source>
</evidence>
<evidence type="ECO:0000303" key="7">
    <source>
    </source>
</evidence>
<evidence type="ECO:0000305" key="8"/>
<evidence type="ECO:0000305" key="9">
    <source>
    </source>
</evidence>
<evidence type="ECO:0007744" key="10">
    <source>
        <dbReference type="PDB" id="2DPM"/>
    </source>
</evidence>
<evidence type="ECO:0007829" key="11">
    <source>
        <dbReference type="PDB" id="2DPM"/>
    </source>
</evidence>
<proteinExistence type="evidence at protein level"/>
<keyword id="KW-0002">3D-structure</keyword>
<keyword id="KW-0903">Direct protein sequencing</keyword>
<keyword id="KW-0238">DNA-binding</keyword>
<keyword id="KW-0489">Methyltransferase</keyword>
<keyword id="KW-0680">Restriction system</keyword>
<keyword id="KW-0949">S-adenosyl-L-methionine</keyword>
<keyword id="KW-0808">Transferase</keyword>
<organism>
    <name type="scientific">Streptococcus pneumoniae</name>
    <dbReference type="NCBI Taxonomy" id="1313"/>
    <lineage>
        <taxon>Bacteria</taxon>
        <taxon>Bacillati</taxon>
        <taxon>Bacillota</taxon>
        <taxon>Bacilli</taxon>
        <taxon>Lactobacillales</taxon>
        <taxon>Streptococcaceae</taxon>
        <taxon>Streptococcus</taxon>
    </lineage>
</organism>
<sequence length="284" mass="32907">MKIKEIKKVTLQPFTKWTGGKRQLLPVIRELIPKTYNRYFEPFVGGGALFFDLAPKDAVINDFNAELINCYQQIKDNPQELIEILKVHQEYNSKEYYLDLRSADRDERIDMMSEVQRAARILYMLRVNFNGLYRVNSKNQFNVPYGRYKNPKIVDEELISAISVYINNNQLEIKVGDFEKAIVDVRTGDFVYFDPPYIPLSETSAFTSYTHEGFSFADQVRLRDAFKRLSDTGAYVMLSNSSSALVEELYKDFNIHYVEATRTNGAKSSSRGKISEIIVTNYEK</sequence>
<gene>
    <name evidence="7" type="primary">dpnM</name>
</gene>
<accession>P04043</accession>
<protein>
    <recommendedName>
        <fullName evidence="5">Type II methyltransferase M1.DpnII</fullName>
        <shortName evidence="5">M1.DpnII</shortName>
        <ecNumber evidence="3">2.1.1.72</ecNumber>
    </recommendedName>
    <alternativeName>
        <fullName evidence="6">Adenine-specific methyltransferase DpnM</fullName>
    </alternativeName>
    <alternativeName>
        <fullName>M.DpnII 1</fullName>
    </alternativeName>
    <alternativeName>
        <fullName evidence="7">Modification methylase DpnIIA</fullName>
    </alternativeName>
</protein>
<feature type="chain" id="PRO_0000087957" description="Type II methyltransferase M1.DpnII">
    <location>
        <begin position="1"/>
        <end position="284"/>
    </location>
</feature>
<feature type="binding site" evidence="4 10">
    <location>
        <position position="17"/>
    </location>
    <ligand>
        <name>S-adenosyl-L-methionine</name>
        <dbReference type="ChEBI" id="CHEBI:59789"/>
    </ligand>
</feature>
<feature type="binding site" evidence="10">
    <location>
        <position position="21"/>
    </location>
    <ligand>
        <name>S-adenosyl-L-methionine</name>
        <dbReference type="ChEBI" id="CHEBI:59789"/>
    </ligand>
</feature>
<feature type="binding site" evidence="4 10">
    <location>
        <position position="46"/>
    </location>
    <ligand>
        <name>S-adenosyl-L-methionine</name>
        <dbReference type="ChEBI" id="CHEBI:59789"/>
    </ligand>
</feature>
<feature type="binding site" evidence="4 10">
    <location>
        <position position="62"/>
    </location>
    <ligand>
        <name>S-adenosyl-L-methionine</name>
        <dbReference type="ChEBI" id="CHEBI:59789"/>
    </ligand>
</feature>
<feature type="binding site" evidence="4 10">
    <location>
        <position position="177"/>
    </location>
    <ligand>
        <name>S-adenosyl-L-methionine</name>
        <dbReference type="ChEBI" id="CHEBI:59789"/>
    </ligand>
</feature>
<feature type="binding site" evidence="4 10">
    <location>
        <position position="178"/>
    </location>
    <ligand>
        <name>S-adenosyl-L-methionine</name>
        <dbReference type="ChEBI" id="CHEBI:59789"/>
    </ligand>
</feature>
<feature type="binding site" evidence="4 10">
    <location>
        <position position="194"/>
    </location>
    <ligand>
        <name>S-adenosyl-L-methionine</name>
        <dbReference type="ChEBI" id="CHEBI:59789"/>
    </ligand>
</feature>
<feature type="helix" evidence="11">
    <location>
        <begin position="22"/>
        <end position="24"/>
    </location>
</feature>
<feature type="helix" evidence="11">
    <location>
        <begin position="25"/>
        <end position="31"/>
    </location>
</feature>
<feature type="strand" evidence="11">
    <location>
        <begin position="39"/>
        <end position="41"/>
    </location>
</feature>
<feature type="helix" evidence="11">
    <location>
        <begin position="48"/>
        <end position="53"/>
    </location>
</feature>
<feature type="strand" evidence="11">
    <location>
        <begin position="56"/>
        <end position="63"/>
    </location>
</feature>
<feature type="helix" evidence="11">
    <location>
        <begin position="65"/>
        <end position="76"/>
    </location>
</feature>
<feature type="helix" evidence="11">
    <location>
        <begin position="78"/>
        <end position="91"/>
    </location>
</feature>
<feature type="helix" evidence="11">
    <location>
        <begin position="94"/>
        <end position="101"/>
    </location>
</feature>
<feature type="helix" evidence="11">
    <location>
        <begin position="102"/>
        <end position="105"/>
    </location>
</feature>
<feature type="helix" evidence="11">
    <location>
        <begin position="108"/>
        <end position="111"/>
    </location>
</feature>
<feature type="helix" evidence="11">
    <location>
        <begin position="114"/>
        <end position="127"/>
    </location>
</feature>
<feature type="helix" evidence="11">
    <location>
        <begin position="129"/>
        <end position="131"/>
    </location>
</feature>
<feature type="helix" evidence="11">
    <location>
        <begin position="156"/>
        <end position="168"/>
    </location>
</feature>
<feature type="strand" evidence="11">
    <location>
        <begin position="169"/>
        <end position="176"/>
    </location>
</feature>
<feature type="helix" evidence="11">
    <location>
        <begin position="178"/>
        <end position="182"/>
    </location>
</feature>
<feature type="strand" evidence="11">
    <location>
        <begin position="190"/>
        <end position="193"/>
    </location>
</feature>
<feature type="helix" evidence="11">
    <location>
        <begin position="216"/>
        <end position="230"/>
    </location>
</feature>
<feature type="turn" evidence="11">
    <location>
        <begin position="231"/>
        <end position="233"/>
    </location>
</feature>
<feature type="strand" evidence="11">
    <location>
        <begin position="235"/>
        <end position="242"/>
    </location>
</feature>
<feature type="helix" evidence="11">
    <location>
        <begin position="244"/>
        <end position="249"/>
    </location>
</feature>
<feature type="turn" evidence="11">
    <location>
        <begin position="250"/>
        <end position="252"/>
    </location>
</feature>
<feature type="strand" evidence="11">
    <location>
        <begin position="253"/>
        <end position="258"/>
    </location>
</feature>
<feature type="strand" evidence="11">
    <location>
        <begin position="276"/>
        <end position="281"/>
    </location>
</feature>